<accession>P22857</accession>
<reference key="1">
    <citation type="journal article" date="1990" name="Agric. Biol. Chem.">
        <title>Molecular cloning of the xylA gene encoding xylose isomerase from Streptomyces griseofuscus S-41: primary structure of the gene and its product.</title>
        <authorList>
            <person name="Kikuchi T."/>
            <person name="Itoh Y."/>
            <person name="Kasumi T."/>
            <person name="Fukazawa C."/>
        </authorList>
    </citation>
    <scope>NUCLEOTIDE SEQUENCE [GENOMIC DNA]</scope>
    <source>
        <strain>S-41</strain>
    </source>
</reference>
<feature type="initiator methionine" description="Removed">
    <location>
        <position position="1"/>
    </location>
</feature>
<feature type="chain" id="PRO_0000195804" description="Xylose isomerase">
    <location>
        <begin position="2"/>
        <end position="394"/>
    </location>
</feature>
<feature type="region of interest" description="Disordered" evidence="2">
    <location>
        <begin position="370"/>
        <end position="394"/>
    </location>
</feature>
<feature type="compositionally biased region" description="Low complexity" evidence="2">
    <location>
        <begin position="373"/>
        <end position="386"/>
    </location>
</feature>
<feature type="active site" evidence="1">
    <location>
        <position position="54"/>
    </location>
</feature>
<feature type="active site" evidence="1">
    <location>
        <position position="57"/>
    </location>
</feature>
<feature type="binding site" evidence="1">
    <location>
        <position position="180"/>
    </location>
    <ligand>
        <name>Mg(2+)</name>
        <dbReference type="ChEBI" id="CHEBI:18420"/>
        <label>1</label>
    </ligand>
</feature>
<feature type="binding site" evidence="1">
    <location>
        <position position="216"/>
    </location>
    <ligand>
        <name>Mg(2+)</name>
        <dbReference type="ChEBI" id="CHEBI:18420"/>
        <label>1</label>
    </ligand>
</feature>
<feature type="binding site" evidence="1">
    <location>
        <position position="216"/>
    </location>
    <ligand>
        <name>Mg(2+)</name>
        <dbReference type="ChEBI" id="CHEBI:18420"/>
        <label>2</label>
    </ligand>
</feature>
<feature type="binding site" evidence="1">
    <location>
        <position position="219"/>
    </location>
    <ligand>
        <name>Mg(2+)</name>
        <dbReference type="ChEBI" id="CHEBI:18420"/>
        <label>2</label>
    </ligand>
</feature>
<feature type="binding site" evidence="1">
    <location>
        <position position="244"/>
    </location>
    <ligand>
        <name>Mg(2+)</name>
        <dbReference type="ChEBI" id="CHEBI:18420"/>
        <label>1</label>
    </ligand>
</feature>
<feature type="binding site" evidence="1">
    <location>
        <position position="254"/>
    </location>
    <ligand>
        <name>Mg(2+)</name>
        <dbReference type="ChEBI" id="CHEBI:18420"/>
        <label>2</label>
    </ligand>
</feature>
<feature type="binding site" evidence="1">
    <location>
        <position position="256"/>
    </location>
    <ligand>
        <name>Mg(2+)</name>
        <dbReference type="ChEBI" id="CHEBI:18420"/>
        <label>2</label>
    </ligand>
</feature>
<feature type="binding site" evidence="1">
    <location>
        <position position="285"/>
    </location>
    <ligand>
        <name>Mg(2+)</name>
        <dbReference type="ChEBI" id="CHEBI:18420"/>
        <label>1</label>
    </ligand>
</feature>
<name>XYLA_STRRO</name>
<evidence type="ECO:0000250" key="1"/>
<evidence type="ECO:0000256" key="2">
    <source>
        <dbReference type="SAM" id="MobiDB-lite"/>
    </source>
</evidence>
<evidence type="ECO:0000305" key="3"/>
<keyword id="KW-0119">Carbohydrate metabolism</keyword>
<keyword id="KW-0963">Cytoplasm</keyword>
<keyword id="KW-0413">Isomerase</keyword>
<keyword id="KW-0460">Magnesium</keyword>
<keyword id="KW-0479">Metal-binding</keyword>
<keyword id="KW-0859">Xylose metabolism</keyword>
<protein>
    <recommendedName>
        <fullName>Xylose isomerase</fullName>
        <ecNumber>5.3.1.5</ecNumber>
    </recommendedName>
</protein>
<organism>
    <name type="scientific">Streptomyces rochei</name>
    <name type="common">Streptomyces parvullus</name>
    <dbReference type="NCBI Taxonomy" id="1928"/>
    <lineage>
        <taxon>Bacteria</taxon>
        <taxon>Bacillati</taxon>
        <taxon>Actinomycetota</taxon>
        <taxon>Actinomycetes</taxon>
        <taxon>Kitasatosporales</taxon>
        <taxon>Streptomycetaceae</taxon>
        <taxon>Streptomyces</taxon>
        <taxon>Streptomyces rochei group</taxon>
    </lineage>
</organism>
<dbReference type="EC" id="5.3.1.5"/>
<dbReference type="PIR" id="JN0086">
    <property type="entry name" value="ISSMXR"/>
</dbReference>
<dbReference type="SMR" id="P22857"/>
<dbReference type="GO" id="GO:0005737">
    <property type="term" value="C:cytoplasm"/>
    <property type="evidence" value="ECO:0007669"/>
    <property type="project" value="UniProtKB-SubCell"/>
</dbReference>
<dbReference type="GO" id="GO:0000287">
    <property type="term" value="F:magnesium ion binding"/>
    <property type="evidence" value="ECO:0007669"/>
    <property type="project" value="UniProtKB-UniRule"/>
</dbReference>
<dbReference type="GO" id="GO:0009045">
    <property type="term" value="F:xylose isomerase activity"/>
    <property type="evidence" value="ECO:0007669"/>
    <property type="project" value="UniProtKB-UniRule"/>
</dbReference>
<dbReference type="GO" id="GO:0042732">
    <property type="term" value="P:D-xylose metabolic process"/>
    <property type="evidence" value="ECO:0007669"/>
    <property type="project" value="UniProtKB-UniRule"/>
</dbReference>
<dbReference type="Gene3D" id="3.20.20.150">
    <property type="entry name" value="Divalent-metal-dependent TIM barrel enzymes"/>
    <property type="match status" value="1"/>
</dbReference>
<dbReference type="HAMAP" id="MF_00455">
    <property type="entry name" value="Xylose_isom_A"/>
    <property type="match status" value="1"/>
</dbReference>
<dbReference type="InterPro" id="IPR036237">
    <property type="entry name" value="Xyl_isomerase-like_sf"/>
</dbReference>
<dbReference type="InterPro" id="IPR013022">
    <property type="entry name" value="Xyl_isomerase-like_TIM-brl"/>
</dbReference>
<dbReference type="InterPro" id="IPR013453">
    <property type="entry name" value="XylA_actinobac"/>
</dbReference>
<dbReference type="InterPro" id="IPR001998">
    <property type="entry name" value="Xylose_isomerase"/>
</dbReference>
<dbReference type="NCBIfam" id="TIGR02631">
    <property type="entry name" value="xylA_Arthro"/>
    <property type="match status" value="1"/>
</dbReference>
<dbReference type="PANTHER" id="PTHR48408">
    <property type="match status" value="1"/>
</dbReference>
<dbReference type="PANTHER" id="PTHR48408:SF1">
    <property type="entry name" value="XYLOSE ISOMERASE"/>
    <property type="match status" value="1"/>
</dbReference>
<dbReference type="Pfam" id="PF01261">
    <property type="entry name" value="AP_endonuc_2"/>
    <property type="match status" value="1"/>
</dbReference>
<dbReference type="PRINTS" id="PR00688">
    <property type="entry name" value="XYLOSISMRASE"/>
</dbReference>
<dbReference type="SUPFAM" id="SSF51658">
    <property type="entry name" value="Xylose isomerase-like"/>
    <property type="match status" value="1"/>
</dbReference>
<dbReference type="PROSITE" id="PS51415">
    <property type="entry name" value="XYLOSE_ISOMERASE"/>
    <property type="match status" value="1"/>
</dbReference>
<proteinExistence type="inferred from homology"/>
<sequence>MSFQPTPEDKFTFGLWTVGWQGRDPFGDATRPGLDPVETVQRLAELGAYGVTFHDDDLNPFGSSDTERESHIKRFRQALDATGMTVPMATTNLFTHPVFKDRFTANDRDVRAYAVRKTIRNIDLAAELGAKTYVAWGGREGAESGGAKDVRDALDRMKEAFDLLGEYVTAQGYDLRFAIEPKPNEPRGDILLPTVGHALAFIERLERPELYGVNPEVGHEQMAGLNFPHGIAQALWAGKLFHIDLNGQSGIKYDQDCGSRRRPAGGVLVVDLLESAGYEGPRHFDFKPPRTEDFDGVWASAEGCMRNYLILKQPRPPSAPTRRCRRRASAPRVWTSWPSRPLADGLEALLADRTAFEDFDVEAAAARGMVRTPRPAGDGPPAGRARLTVAPRKR</sequence>
<comment type="function">
    <text>Involved in D-xylose catabolism.</text>
</comment>
<comment type="catalytic activity">
    <reaction>
        <text>alpha-D-xylose = alpha-D-xylulofuranose</text>
        <dbReference type="Rhea" id="RHEA:22816"/>
        <dbReference type="ChEBI" id="CHEBI:28518"/>
        <dbReference type="ChEBI" id="CHEBI:188998"/>
        <dbReference type="EC" id="5.3.1.5"/>
    </reaction>
</comment>
<comment type="cofactor">
    <cofactor evidence="1">
        <name>Mg(2+)</name>
        <dbReference type="ChEBI" id="CHEBI:18420"/>
    </cofactor>
    <text evidence="1">Binds 2 magnesium ions per subunit.</text>
</comment>
<comment type="subunit">
    <text evidence="1">Homotetramer.</text>
</comment>
<comment type="subcellular location">
    <subcellularLocation>
        <location evidence="1">Cytoplasm</location>
    </subcellularLocation>
</comment>
<comment type="similarity">
    <text evidence="3">Belongs to the xylose isomerase family.</text>
</comment>
<gene>
    <name type="primary">xylA</name>
</gene>